<dbReference type="EC" id="5.4.2.8"/>
<dbReference type="EMBL" id="CU329670">
    <property type="protein sequence ID" value="CAB61218.1"/>
    <property type="molecule type" value="Genomic_DNA"/>
</dbReference>
<dbReference type="EMBL" id="AB000703">
    <property type="protein sequence ID" value="BAA19164.1"/>
    <property type="molecule type" value="mRNA"/>
</dbReference>
<dbReference type="PIR" id="T50086">
    <property type="entry name" value="T50086"/>
</dbReference>
<dbReference type="RefSeq" id="NP_594325.1">
    <property type="nucleotide sequence ID" value="NM_001019747.2"/>
</dbReference>
<dbReference type="SMR" id="Q9UTJ2"/>
<dbReference type="BioGRID" id="278170">
    <property type="interactions" value="5"/>
</dbReference>
<dbReference type="FunCoup" id="Q9UTJ2">
    <property type="interactions" value="520"/>
</dbReference>
<dbReference type="STRING" id="284812.Q9UTJ2"/>
<dbReference type="iPTMnet" id="Q9UTJ2"/>
<dbReference type="PaxDb" id="4896-SPAC1556.07.1"/>
<dbReference type="EnsemblFungi" id="SPAC1556.07.1">
    <property type="protein sequence ID" value="SPAC1556.07.1:pep"/>
    <property type="gene ID" value="SPAC1556.07"/>
</dbReference>
<dbReference type="GeneID" id="2541674"/>
<dbReference type="KEGG" id="spo:2541674"/>
<dbReference type="PomBase" id="SPAC1556.07">
    <property type="gene designation" value="pmm1"/>
</dbReference>
<dbReference type="VEuPathDB" id="FungiDB:SPAC1556.07"/>
<dbReference type="eggNOG" id="KOG3189">
    <property type="taxonomic scope" value="Eukaryota"/>
</dbReference>
<dbReference type="HOGENOM" id="CLU_065642_0_1_1"/>
<dbReference type="InParanoid" id="Q9UTJ2"/>
<dbReference type="OMA" id="ISHRVYT"/>
<dbReference type="PhylomeDB" id="Q9UTJ2"/>
<dbReference type="Reactome" id="R-SPO-446205">
    <property type="pathway name" value="Synthesis of GDP-mannose"/>
</dbReference>
<dbReference type="UniPathway" id="UPA00126">
    <property type="reaction ID" value="UER00424"/>
</dbReference>
<dbReference type="PRO" id="PR:Q9UTJ2"/>
<dbReference type="Proteomes" id="UP000002485">
    <property type="component" value="Chromosome I"/>
</dbReference>
<dbReference type="GO" id="GO:0005829">
    <property type="term" value="C:cytosol"/>
    <property type="evidence" value="ECO:0000318"/>
    <property type="project" value="GO_Central"/>
</dbReference>
<dbReference type="GO" id="GO:0046872">
    <property type="term" value="F:metal ion binding"/>
    <property type="evidence" value="ECO:0007669"/>
    <property type="project" value="UniProtKB-KW"/>
</dbReference>
<dbReference type="GO" id="GO:0004615">
    <property type="term" value="F:phosphomannomutase activity"/>
    <property type="evidence" value="ECO:0000318"/>
    <property type="project" value="GO_Central"/>
</dbReference>
<dbReference type="GO" id="GO:0009298">
    <property type="term" value="P:GDP-mannose biosynthetic process"/>
    <property type="evidence" value="ECO:0007669"/>
    <property type="project" value="UniProtKB-UniPathway"/>
</dbReference>
<dbReference type="GO" id="GO:0006013">
    <property type="term" value="P:mannose metabolic process"/>
    <property type="evidence" value="ECO:0000318"/>
    <property type="project" value="GO_Central"/>
</dbReference>
<dbReference type="GO" id="GO:0006487">
    <property type="term" value="P:protein N-linked glycosylation"/>
    <property type="evidence" value="ECO:0000318"/>
    <property type="project" value="GO_Central"/>
</dbReference>
<dbReference type="CDD" id="cd02585">
    <property type="entry name" value="HAD_PMM"/>
    <property type="match status" value="1"/>
</dbReference>
<dbReference type="FunFam" id="3.30.1240.20:FF:000001">
    <property type="entry name" value="Phosphomannomutase"/>
    <property type="match status" value="1"/>
</dbReference>
<dbReference type="Gene3D" id="3.30.1240.20">
    <property type="match status" value="1"/>
</dbReference>
<dbReference type="Gene3D" id="3.40.50.1000">
    <property type="entry name" value="HAD superfamily/HAD-like"/>
    <property type="match status" value="1"/>
</dbReference>
<dbReference type="InterPro" id="IPR036412">
    <property type="entry name" value="HAD-like_sf"/>
</dbReference>
<dbReference type="InterPro" id="IPR006379">
    <property type="entry name" value="HAD-SF_hydro_IIB"/>
</dbReference>
<dbReference type="InterPro" id="IPR023214">
    <property type="entry name" value="HAD_sf"/>
</dbReference>
<dbReference type="InterPro" id="IPR005002">
    <property type="entry name" value="PMM"/>
</dbReference>
<dbReference type="InterPro" id="IPR043169">
    <property type="entry name" value="PMM_cap"/>
</dbReference>
<dbReference type="NCBIfam" id="TIGR01484">
    <property type="entry name" value="HAD-SF-IIB"/>
    <property type="match status" value="1"/>
</dbReference>
<dbReference type="PANTHER" id="PTHR10466">
    <property type="entry name" value="PHOSPHOMANNOMUTASE"/>
    <property type="match status" value="1"/>
</dbReference>
<dbReference type="PANTHER" id="PTHR10466:SF0">
    <property type="entry name" value="PHOSPHOMANNOMUTASE"/>
    <property type="match status" value="1"/>
</dbReference>
<dbReference type="Pfam" id="PF03332">
    <property type="entry name" value="PMM"/>
    <property type="match status" value="1"/>
</dbReference>
<dbReference type="SFLD" id="SFLDF00445">
    <property type="entry name" value="alpha-phosphomannomutase"/>
    <property type="match status" value="1"/>
</dbReference>
<dbReference type="SFLD" id="SFLDG01140">
    <property type="entry name" value="C2.B:_Phosphomannomutase_and_P"/>
    <property type="match status" value="1"/>
</dbReference>
<dbReference type="SUPFAM" id="SSF56784">
    <property type="entry name" value="HAD-like"/>
    <property type="match status" value="1"/>
</dbReference>
<reference key="1">
    <citation type="journal article" date="2002" name="Nature">
        <title>The genome sequence of Schizosaccharomyces pombe.</title>
        <authorList>
            <person name="Wood V."/>
            <person name="Gwilliam R."/>
            <person name="Rajandream M.A."/>
            <person name="Lyne M.H."/>
            <person name="Lyne R."/>
            <person name="Stewart A."/>
            <person name="Sgouros J.G."/>
            <person name="Peat N."/>
            <person name="Hayles J."/>
            <person name="Baker S.G."/>
            <person name="Basham D."/>
            <person name="Bowman S."/>
            <person name="Brooks K."/>
            <person name="Brown D."/>
            <person name="Brown S."/>
            <person name="Chillingworth T."/>
            <person name="Churcher C.M."/>
            <person name="Collins M."/>
            <person name="Connor R."/>
            <person name="Cronin A."/>
            <person name="Davis P."/>
            <person name="Feltwell T."/>
            <person name="Fraser A."/>
            <person name="Gentles S."/>
            <person name="Goble A."/>
            <person name="Hamlin N."/>
            <person name="Harris D.E."/>
            <person name="Hidalgo J."/>
            <person name="Hodgson G."/>
            <person name="Holroyd S."/>
            <person name="Hornsby T."/>
            <person name="Howarth S."/>
            <person name="Huckle E.J."/>
            <person name="Hunt S."/>
            <person name="Jagels K."/>
            <person name="James K.D."/>
            <person name="Jones L."/>
            <person name="Jones M."/>
            <person name="Leather S."/>
            <person name="McDonald S."/>
            <person name="McLean J."/>
            <person name="Mooney P."/>
            <person name="Moule S."/>
            <person name="Mungall K.L."/>
            <person name="Murphy L.D."/>
            <person name="Niblett D."/>
            <person name="Odell C."/>
            <person name="Oliver K."/>
            <person name="O'Neil S."/>
            <person name="Pearson D."/>
            <person name="Quail M.A."/>
            <person name="Rabbinowitsch E."/>
            <person name="Rutherford K.M."/>
            <person name="Rutter S."/>
            <person name="Saunders D."/>
            <person name="Seeger K."/>
            <person name="Sharp S."/>
            <person name="Skelton J."/>
            <person name="Simmonds M.N."/>
            <person name="Squares R."/>
            <person name="Squares S."/>
            <person name="Stevens K."/>
            <person name="Taylor K."/>
            <person name="Taylor R.G."/>
            <person name="Tivey A."/>
            <person name="Walsh S.V."/>
            <person name="Warren T."/>
            <person name="Whitehead S."/>
            <person name="Woodward J.R."/>
            <person name="Volckaert G."/>
            <person name="Aert R."/>
            <person name="Robben J."/>
            <person name="Grymonprez B."/>
            <person name="Weltjens I."/>
            <person name="Vanstreels E."/>
            <person name="Rieger M."/>
            <person name="Schaefer M."/>
            <person name="Mueller-Auer S."/>
            <person name="Gabel C."/>
            <person name="Fuchs M."/>
            <person name="Duesterhoeft A."/>
            <person name="Fritzc C."/>
            <person name="Holzer E."/>
            <person name="Moestl D."/>
            <person name="Hilbert H."/>
            <person name="Borzym K."/>
            <person name="Langer I."/>
            <person name="Beck A."/>
            <person name="Lehrach H."/>
            <person name="Reinhardt R."/>
            <person name="Pohl T.M."/>
            <person name="Eger P."/>
            <person name="Zimmermann W."/>
            <person name="Wedler H."/>
            <person name="Wambutt R."/>
            <person name="Purnelle B."/>
            <person name="Goffeau A."/>
            <person name="Cadieu E."/>
            <person name="Dreano S."/>
            <person name="Gloux S."/>
            <person name="Lelaure V."/>
            <person name="Mottier S."/>
            <person name="Galibert F."/>
            <person name="Aves S.J."/>
            <person name="Xiang Z."/>
            <person name="Hunt C."/>
            <person name="Moore K."/>
            <person name="Hurst S.M."/>
            <person name="Lucas M."/>
            <person name="Rochet M."/>
            <person name="Gaillardin C."/>
            <person name="Tallada V.A."/>
            <person name="Garzon A."/>
            <person name="Thode G."/>
            <person name="Daga R.R."/>
            <person name="Cruzado L."/>
            <person name="Jimenez J."/>
            <person name="Sanchez M."/>
            <person name="del Rey F."/>
            <person name="Benito J."/>
            <person name="Dominguez A."/>
            <person name="Revuelta J.L."/>
            <person name="Moreno S."/>
            <person name="Armstrong J."/>
            <person name="Forsburg S.L."/>
            <person name="Cerutti L."/>
            <person name="Lowe T."/>
            <person name="McCombie W.R."/>
            <person name="Paulsen I."/>
            <person name="Potashkin J."/>
            <person name="Shpakovski G.V."/>
            <person name="Ussery D."/>
            <person name="Barrell B.G."/>
            <person name="Nurse P."/>
        </authorList>
    </citation>
    <scope>NUCLEOTIDE SEQUENCE [LARGE SCALE GENOMIC DNA]</scope>
    <source>
        <strain>972 / ATCC 24843</strain>
    </source>
</reference>
<reference key="2">
    <citation type="submission" date="1997-01" db="EMBL/GenBank/DDBJ databases">
        <title>S.pombe phosphomannomutase homolog.</title>
        <authorList>
            <person name="Kawamukai M."/>
        </authorList>
    </citation>
    <scope>NUCLEOTIDE SEQUENCE [MRNA] OF 2-257</scope>
</reference>
<proteinExistence type="evidence at transcript level"/>
<keyword id="KW-0963">Cytoplasm</keyword>
<keyword id="KW-0413">Isomerase</keyword>
<keyword id="KW-0460">Magnesium</keyword>
<keyword id="KW-0479">Metal-binding</keyword>
<keyword id="KW-1185">Reference proteome</keyword>
<protein>
    <recommendedName>
        <fullName>Phosphomannomutase</fullName>
        <shortName>PMM</shortName>
        <ecNumber>5.4.2.8</ecNumber>
    </recommendedName>
</protein>
<organism>
    <name type="scientific">Schizosaccharomyces pombe (strain 972 / ATCC 24843)</name>
    <name type="common">Fission yeast</name>
    <dbReference type="NCBI Taxonomy" id="284812"/>
    <lineage>
        <taxon>Eukaryota</taxon>
        <taxon>Fungi</taxon>
        <taxon>Dikarya</taxon>
        <taxon>Ascomycota</taxon>
        <taxon>Taphrinomycotina</taxon>
        <taxon>Schizosaccharomycetes</taxon>
        <taxon>Schizosaccharomycetales</taxon>
        <taxon>Schizosaccharomycetaceae</taxon>
        <taxon>Schizosaccharomyces</taxon>
    </lineage>
</organism>
<feature type="chain" id="PRO_0000199702" description="Phosphomannomutase">
    <location>
        <begin position="1"/>
        <end position="257"/>
    </location>
</feature>
<feature type="active site" description="Nucleophile" evidence="3">
    <location>
        <position position="19"/>
    </location>
</feature>
<feature type="active site" description="Proton donor/acceptor" evidence="3">
    <location>
        <position position="21"/>
    </location>
</feature>
<feature type="binding site" evidence="2">
    <location>
        <position position="19"/>
    </location>
    <ligand>
        <name>Mg(2+)</name>
        <dbReference type="ChEBI" id="CHEBI:18420"/>
        <label>1</label>
    </ligand>
</feature>
<feature type="binding site" evidence="2">
    <location>
        <position position="21"/>
    </location>
    <ligand>
        <name>Mg(2+)</name>
        <dbReference type="ChEBI" id="CHEBI:18420"/>
        <label>1</label>
    </ligand>
</feature>
<feature type="binding site" evidence="3">
    <location>
        <position position="28"/>
    </location>
    <ligand>
        <name>alpha-D-mannose 1-phosphate</name>
        <dbReference type="ChEBI" id="CHEBI:58409"/>
    </ligand>
</feature>
<feature type="binding site" evidence="3">
    <location>
        <position position="133"/>
    </location>
    <ligand>
        <name>alpha-D-mannose 1-phosphate</name>
        <dbReference type="ChEBI" id="CHEBI:58409"/>
    </ligand>
</feature>
<feature type="binding site" evidence="3">
    <location>
        <position position="144"/>
    </location>
    <ligand>
        <name>alpha-D-mannose 1-phosphate</name>
        <dbReference type="ChEBI" id="CHEBI:58409"/>
    </ligand>
</feature>
<feature type="binding site" evidence="3">
    <location>
        <position position="151"/>
    </location>
    <ligand>
        <name>alpha-D-mannose 1-phosphate</name>
        <dbReference type="ChEBI" id="CHEBI:58409"/>
    </ligand>
</feature>
<feature type="binding site" evidence="3">
    <location>
        <position position="189"/>
    </location>
    <ligand>
        <name>alpha-D-mannose 1-phosphate</name>
        <dbReference type="ChEBI" id="CHEBI:58409"/>
    </ligand>
</feature>
<feature type="binding site" evidence="3">
    <location>
        <position position="191"/>
    </location>
    <ligand>
        <name>alpha-D-mannose 1-phosphate</name>
        <dbReference type="ChEBI" id="CHEBI:58409"/>
    </ligand>
</feature>
<feature type="binding site" evidence="2">
    <location>
        <position position="219"/>
    </location>
    <ligand>
        <name>Mg(2+)</name>
        <dbReference type="ChEBI" id="CHEBI:18420"/>
        <label>1</label>
    </ligand>
</feature>
<feature type="binding site" evidence="3">
    <location>
        <position position="231"/>
    </location>
    <ligand>
        <name>Mg(2+)</name>
        <dbReference type="ChEBI" id="CHEBI:18420"/>
        <label>2</label>
    </ligand>
</feature>
<feature type="binding site" evidence="2">
    <location>
        <position position="233"/>
    </location>
    <ligand>
        <name>Mg(2+)</name>
        <dbReference type="ChEBI" id="CHEBI:18420"/>
        <label>2</label>
    </ligand>
</feature>
<feature type="binding site" evidence="2">
    <location>
        <position position="236"/>
    </location>
    <ligand>
        <name>Mg(2+)</name>
        <dbReference type="ChEBI" id="CHEBI:18420"/>
        <label>2</label>
    </ligand>
</feature>
<accession>Q9UTJ2</accession>
<accession>P79012</accession>
<name>PMM_SCHPO</name>
<comment type="function">
    <text evidence="1">Involved in the synthesis of the GDP-mannose and dolichol-phosphate-mannose required for a number of critical mannosyl transfer reactions.</text>
</comment>
<comment type="catalytic activity">
    <reaction>
        <text>alpha-D-mannose 1-phosphate = D-mannose 6-phosphate</text>
        <dbReference type="Rhea" id="RHEA:11140"/>
        <dbReference type="ChEBI" id="CHEBI:58409"/>
        <dbReference type="ChEBI" id="CHEBI:58735"/>
        <dbReference type="EC" id="5.4.2.8"/>
    </reaction>
</comment>
<comment type="pathway">
    <text>Nucleotide-sugar biosynthesis; GDP-alpha-D-mannose biosynthesis; alpha-D-mannose 1-phosphate from D-fructose 6-phosphate: step 2/2.</text>
</comment>
<comment type="subunit">
    <text evidence="1">Homodimer.</text>
</comment>
<comment type="subcellular location">
    <subcellularLocation>
        <location evidence="1">Cytoplasm</location>
    </subcellularLocation>
</comment>
<comment type="similarity">
    <text evidence="4">Belongs to the eukaryotic PMM family.</text>
</comment>
<gene>
    <name type="primary">pmm1</name>
    <name type="ORF">SPAC1556.07</name>
</gene>
<evidence type="ECO:0000250" key="1"/>
<evidence type="ECO:0000250" key="2">
    <source>
        <dbReference type="UniProtKB" id="P31353"/>
    </source>
</evidence>
<evidence type="ECO:0000250" key="3">
    <source>
        <dbReference type="UniProtKB" id="Q92871"/>
    </source>
</evidence>
<evidence type="ECO:0000305" key="4"/>
<sequence>MAVIPIEERKFPKTLVLFDVDGTLTPARLSVSPEMLETLQNLRKVVAIGFVGGSDLSKQQEQLSVNGENVIDSFDYAFAENGLTAYRYGQQLASQSFIAWLGEEKYQKLVNFCLHYIADLDIPVKRGTFIEFRNGMINISPVGRNANTEERNEFERFDKGRKIRATMVDVLREKFKDYGLTFSIGGQISFDVFPAGWDKTYCLQHVEKEGFDTIHFFGDKTYKGGNDYEIFVDPRTIGHSVTNPDDTIAELKKIFNI</sequence>